<sequence length="573" mass="62169">MTHPDRANVNPGSPPLRETLSQLRLRELLLEVQDRIEQIVEGRDRLDGLIDAILAITSGLKLDATLRAIVHTAAELVDARYGALGVRGYDHRLVEFVYEGIDEETRHLIGSLPEGRGVLGALIEEPKPIRLDDISRHPASVGFPLHHPPMRTFLGVPVRIRDEVFGNLYLTEKADGQPFSDDDEVLVQALAAAAGIAVDNARLFEESRTREAWIEATRDIGTQMLAGADPAMVFRLIAEEALTLMAGAATLVAVPLDDEAPACEVDDLVIVEVAGEISPAVKQMTVAVSGTSIGGVFHDRTPRRFDRLDLAVDGPVEPGPALVLPLRAADTVAGVLVALRSADEQPFSDKQLDMMAAFADQAALAWRLATAQRQMREVEILTDRDRIARDLHDHVIQRLFAVGLTLQGAAPRARVPAVRESIYSSIDDLQEIIQEIRSAIFDLHAGPSRATGLRHRLDKVIDQLAIPALHTTVQYTGPLSVVDTVLANHAEAVLREAVSNAVRHANATSLAINVSVEDDVRVEVVDDGVGISGDITESGLRNLRQRADDAGGEFTVENMPTGGTLLRWSAPLR</sequence>
<protein>
    <recommendedName>
        <fullName evidence="3">Oxygen sensor histidine kinase response regulator DosT</fullName>
    </recommendedName>
</protein>
<proteinExistence type="inferred from homology"/>
<organism>
    <name type="scientific">Mycobacterium tuberculosis (strain CDC 1551 / Oshkosh)</name>
    <dbReference type="NCBI Taxonomy" id="83331"/>
    <lineage>
        <taxon>Bacteria</taxon>
        <taxon>Bacillati</taxon>
        <taxon>Actinomycetota</taxon>
        <taxon>Actinomycetes</taxon>
        <taxon>Mycobacteriales</taxon>
        <taxon>Mycobacteriaceae</taxon>
        <taxon>Mycobacterium</taxon>
        <taxon>Mycobacterium tuberculosis complex</taxon>
    </lineage>
</organism>
<dbReference type="EMBL" id="AE000516">
    <property type="protein sequence ID" value="AAK46365.1"/>
    <property type="molecule type" value="Genomic_DNA"/>
</dbReference>
<dbReference type="PIR" id="B70942">
    <property type="entry name" value="B70942"/>
</dbReference>
<dbReference type="RefSeq" id="WP_003899138.1">
    <property type="nucleotide sequence ID" value="NZ_KK341227.1"/>
</dbReference>
<dbReference type="SMR" id="P9WGK0"/>
<dbReference type="KEGG" id="mtc:MT2086"/>
<dbReference type="PATRIC" id="fig|83331.31.peg.2250"/>
<dbReference type="HOGENOM" id="CLU_034370_1_0_11"/>
<dbReference type="Proteomes" id="UP000001020">
    <property type="component" value="Chromosome"/>
</dbReference>
<dbReference type="GO" id="GO:0005737">
    <property type="term" value="C:cytoplasm"/>
    <property type="evidence" value="ECO:0007669"/>
    <property type="project" value="UniProtKB-SubCell"/>
</dbReference>
<dbReference type="GO" id="GO:0016020">
    <property type="term" value="C:membrane"/>
    <property type="evidence" value="ECO:0007669"/>
    <property type="project" value="InterPro"/>
</dbReference>
<dbReference type="GO" id="GO:0046872">
    <property type="term" value="F:metal ion binding"/>
    <property type="evidence" value="ECO:0007669"/>
    <property type="project" value="UniProtKB-KW"/>
</dbReference>
<dbReference type="GO" id="GO:0000155">
    <property type="term" value="F:phosphorelay sensor kinase activity"/>
    <property type="evidence" value="ECO:0007669"/>
    <property type="project" value="InterPro"/>
</dbReference>
<dbReference type="GO" id="GO:0046983">
    <property type="term" value="F:protein dimerization activity"/>
    <property type="evidence" value="ECO:0007669"/>
    <property type="project" value="InterPro"/>
</dbReference>
<dbReference type="FunFam" id="3.30.450.40:FF:000052">
    <property type="entry name" value="Oxygen sensor histidine kinase response regulator DevS/DosS"/>
    <property type="match status" value="1"/>
</dbReference>
<dbReference type="Gene3D" id="1.20.5.1930">
    <property type="match status" value="1"/>
</dbReference>
<dbReference type="Gene3D" id="3.30.450.40">
    <property type="match status" value="2"/>
</dbReference>
<dbReference type="Gene3D" id="3.30.565.10">
    <property type="entry name" value="Histidine kinase-like ATPase, C-terminal domain"/>
    <property type="match status" value="1"/>
</dbReference>
<dbReference type="InterPro" id="IPR003018">
    <property type="entry name" value="GAF"/>
</dbReference>
<dbReference type="InterPro" id="IPR029016">
    <property type="entry name" value="GAF-like_dom_sf"/>
</dbReference>
<dbReference type="InterPro" id="IPR036890">
    <property type="entry name" value="HATPase_C_sf"/>
</dbReference>
<dbReference type="InterPro" id="IPR050482">
    <property type="entry name" value="Sensor_HK_TwoCompSys"/>
</dbReference>
<dbReference type="InterPro" id="IPR011712">
    <property type="entry name" value="Sig_transdc_His_kin_sub3_dim/P"/>
</dbReference>
<dbReference type="PANTHER" id="PTHR24421">
    <property type="entry name" value="NITRATE/NITRITE SENSOR PROTEIN NARX-RELATED"/>
    <property type="match status" value="1"/>
</dbReference>
<dbReference type="PANTHER" id="PTHR24421:SF56">
    <property type="entry name" value="OXYGEN SENSOR HISTIDINE KINASE RESPONSE REGULATOR DOST"/>
    <property type="match status" value="1"/>
</dbReference>
<dbReference type="Pfam" id="PF13185">
    <property type="entry name" value="GAF_2"/>
    <property type="match status" value="1"/>
</dbReference>
<dbReference type="Pfam" id="PF13492">
    <property type="entry name" value="GAF_3"/>
    <property type="match status" value="1"/>
</dbReference>
<dbReference type="Pfam" id="PF02518">
    <property type="entry name" value="HATPase_c"/>
    <property type="match status" value="1"/>
</dbReference>
<dbReference type="Pfam" id="PF07730">
    <property type="entry name" value="HisKA_3"/>
    <property type="match status" value="1"/>
</dbReference>
<dbReference type="SMART" id="SM00065">
    <property type="entry name" value="GAF"/>
    <property type="match status" value="2"/>
</dbReference>
<dbReference type="SMART" id="SM00387">
    <property type="entry name" value="HATPase_c"/>
    <property type="match status" value="1"/>
</dbReference>
<dbReference type="SUPFAM" id="SSF55874">
    <property type="entry name" value="ATPase domain of HSP90 chaperone/DNA topoisomerase II/histidine kinase"/>
    <property type="match status" value="1"/>
</dbReference>
<dbReference type="SUPFAM" id="SSF55781">
    <property type="entry name" value="GAF domain-like"/>
    <property type="match status" value="2"/>
</dbReference>
<comment type="function">
    <text evidence="2">Interacts with the two-component regulatory system DevR/DevS (DosR/DosS) involved in onset of the dormancy response. Required for full induction of the DevR (DosR) regulon; required during early adaptation to anaerobiosis, to start induction of the DevR regulon (By similarity). May act as a direct hypoxia/oxygen sensor (By similarity). May be the secondary sensor for CO (By similarity). Donates a phosphate group to DevR (DosR) (By similarity).</text>
</comment>
<comment type="cofactor">
    <cofactor evidence="2">
        <name>Mg(2+)</name>
        <dbReference type="ChEBI" id="CHEBI:18420"/>
    </cofactor>
</comment>
<comment type="cofactor">
    <cofactor evidence="2">
        <name>heme</name>
        <dbReference type="ChEBI" id="CHEBI:30413"/>
    </cofactor>
    <text evidence="2">Binds 1 heme group per monomer.</text>
</comment>
<comment type="subcellular location">
    <subcellularLocation>
        <location evidence="2">Cytoplasm</location>
    </subcellularLocation>
</comment>
<accession>P9WGK0</accession>
<accession>L0TB49</accession>
<accession>O53473</accession>
<accession>Q7D7L6</accession>
<evidence type="ECO:0000250" key="1"/>
<evidence type="ECO:0000250" key="2">
    <source>
        <dbReference type="UniProtKB" id="P9WGK1"/>
    </source>
</evidence>
<evidence type="ECO:0000305" key="3"/>
<keyword id="KW-0963">Cytoplasm</keyword>
<keyword id="KW-0349">Heme</keyword>
<keyword id="KW-0408">Iron</keyword>
<keyword id="KW-0418">Kinase</keyword>
<keyword id="KW-0460">Magnesium</keyword>
<keyword id="KW-0479">Metal-binding</keyword>
<keyword id="KW-0597">Phosphoprotein</keyword>
<keyword id="KW-1185">Reference proteome</keyword>
<keyword id="KW-0677">Repeat</keyword>
<keyword id="KW-0808">Transferase</keyword>
<keyword id="KW-0902">Two-component regulatory system</keyword>
<name>DOST_MYCTO</name>
<reference key="1">
    <citation type="journal article" date="2002" name="J. Bacteriol.">
        <title>Whole-genome comparison of Mycobacterium tuberculosis clinical and laboratory strains.</title>
        <authorList>
            <person name="Fleischmann R.D."/>
            <person name="Alland D."/>
            <person name="Eisen J.A."/>
            <person name="Carpenter L."/>
            <person name="White O."/>
            <person name="Peterson J.D."/>
            <person name="DeBoy R.T."/>
            <person name="Dodson R.J."/>
            <person name="Gwinn M.L."/>
            <person name="Haft D.H."/>
            <person name="Hickey E.K."/>
            <person name="Kolonay J.F."/>
            <person name="Nelson W.C."/>
            <person name="Umayam L.A."/>
            <person name="Ermolaeva M.D."/>
            <person name="Salzberg S.L."/>
            <person name="Delcher A."/>
            <person name="Utterback T.R."/>
            <person name="Weidman J.F."/>
            <person name="Khouri H.M."/>
            <person name="Gill J."/>
            <person name="Mikula A."/>
            <person name="Bishai W."/>
            <person name="Jacobs W.R. Jr."/>
            <person name="Venter J.C."/>
            <person name="Fraser C.M."/>
        </authorList>
    </citation>
    <scope>NUCLEOTIDE SEQUENCE [LARGE SCALE GENOMIC DNA]</scope>
    <source>
        <strain>CDC 1551 / Oshkosh</strain>
    </source>
</reference>
<feature type="chain" id="PRO_0000428348" description="Oxygen sensor histidine kinase response regulator DosT">
    <location>
        <begin position="1"/>
        <end position="573"/>
    </location>
</feature>
<feature type="domain" description="GAF 1">
    <location>
        <begin position="61"/>
        <end position="198"/>
    </location>
</feature>
<feature type="domain" description="GAF 2">
    <location>
        <begin position="229"/>
        <end position="366"/>
    </location>
</feature>
<feature type="domain" description="Histidine kinase">
    <location>
        <begin position="380"/>
        <end position="573"/>
    </location>
</feature>
<feature type="binding site" description="axial binding residue" evidence="1">
    <location>
        <position position="147"/>
    </location>
    <ligand>
        <name>heme</name>
        <dbReference type="ChEBI" id="CHEBI:30413"/>
    </ligand>
    <ligandPart>
        <name>Fe</name>
        <dbReference type="ChEBI" id="CHEBI:18248"/>
    </ligandPart>
</feature>
<feature type="modified residue" description="Phosphohistidine; by autocatalysis" evidence="1">
    <location>
        <position position="392"/>
    </location>
</feature>
<gene>
    <name type="primary">dosT</name>
    <name type="ordered locus">MT2086</name>
</gene>